<keyword id="KW-0002">3D-structure</keyword>
<keyword id="KW-0131">Cell cycle</keyword>
<keyword id="KW-0132">Cell division</keyword>
<keyword id="KW-0963">Cytoplasm</keyword>
<keyword id="KW-0206">Cytoskeleton</keyword>
<keyword id="KW-0493">Microtubule</keyword>
<keyword id="KW-0498">Mitosis</keyword>
<keyword id="KW-1185">Reference proteome</keyword>
<proteinExistence type="evidence at protein level"/>
<feature type="chain" id="PRO_0000213431" description="Microtubule integrity protein mal3">
    <location>
        <begin position="1"/>
        <end position="308"/>
    </location>
</feature>
<feature type="domain" description="Calponin-homology (CH)" evidence="1">
    <location>
        <begin position="2"/>
        <end position="103"/>
    </location>
</feature>
<feature type="domain" description="EB1 C-terminal" evidence="2">
    <location>
        <begin position="173"/>
        <end position="247"/>
    </location>
</feature>
<feature type="region of interest" description="Disordered" evidence="3">
    <location>
        <begin position="117"/>
        <end position="162"/>
    </location>
</feature>
<feature type="compositionally biased region" description="Low complexity" evidence="3">
    <location>
        <begin position="144"/>
        <end position="162"/>
    </location>
</feature>
<feature type="helix" evidence="9">
    <location>
        <begin position="177"/>
        <end position="220"/>
    </location>
</feature>
<feature type="helix" evidence="9">
    <location>
        <begin position="227"/>
        <end position="239"/>
    </location>
</feature>
<accession>Q10113</accession>
<dbReference type="EMBL" id="Y09518">
    <property type="protein sequence ID" value="CAA70707.1"/>
    <property type="molecule type" value="Genomic_DNA"/>
</dbReference>
<dbReference type="EMBL" id="CU329670">
    <property type="protein sequence ID" value="CAA92392.1"/>
    <property type="molecule type" value="Genomic_DNA"/>
</dbReference>
<dbReference type="PIR" id="T43413">
    <property type="entry name" value="T43413"/>
</dbReference>
<dbReference type="RefSeq" id="NP_593678.1">
    <property type="nucleotide sequence ID" value="NM_001019110.2"/>
</dbReference>
<dbReference type="PDB" id="4ABO">
    <property type="method" value="EM"/>
    <property type="resolution" value="8.60 A"/>
    <property type="chains" value="I=2-142"/>
</dbReference>
<dbReference type="PDB" id="5M97">
    <property type="method" value="X-ray"/>
    <property type="resolution" value="1.33 A"/>
    <property type="chains" value="A/B=174-247"/>
</dbReference>
<dbReference type="PDB" id="5M9E">
    <property type="method" value="X-ray"/>
    <property type="resolution" value="2.83 A"/>
    <property type="chains" value="A/B/C/D=174-247"/>
</dbReference>
<dbReference type="PDB" id="5MJS">
    <property type="method" value="EM"/>
    <property type="resolution" value="4.60 A"/>
    <property type="chains" value="D=1-143"/>
</dbReference>
<dbReference type="PDBsum" id="4ABO"/>
<dbReference type="PDBsum" id="5M97"/>
<dbReference type="PDBsum" id="5M9E"/>
<dbReference type="PDBsum" id="5MJS"/>
<dbReference type="EMDB" id="EMD-2005"/>
<dbReference type="EMDB" id="EMD-3522"/>
<dbReference type="SMR" id="Q10113"/>
<dbReference type="BioGRID" id="278599">
    <property type="interactions" value="136"/>
</dbReference>
<dbReference type="DIP" id="DIP-35342N"/>
<dbReference type="FunCoup" id="Q10113">
    <property type="interactions" value="277"/>
</dbReference>
<dbReference type="IntAct" id="Q10113">
    <property type="interactions" value="9"/>
</dbReference>
<dbReference type="MINT" id="Q10113"/>
<dbReference type="STRING" id="284812.Q10113"/>
<dbReference type="iPTMnet" id="Q10113"/>
<dbReference type="PaxDb" id="4896-SPAC18G6.15.1"/>
<dbReference type="EnsemblFungi" id="SPAC18G6.15.1">
    <property type="protein sequence ID" value="SPAC18G6.15.1:pep"/>
    <property type="gene ID" value="SPAC18G6.15"/>
</dbReference>
<dbReference type="GeneID" id="2542123"/>
<dbReference type="KEGG" id="spo:2542123"/>
<dbReference type="PomBase" id="SPAC18G6.15">
    <property type="gene designation" value="mal3"/>
</dbReference>
<dbReference type="VEuPathDB" id="FungiDB:SPAC18G6.15"/>
<dbReference type="eggNOG" id="KOG3000">
    <property type="taxonomic scope" value="Eukaryota"/>
</dbReference>
<dbReference type="HOGENOM" id="CLU_041744_2_1_1"/>
<dbReference type="InParanoid" id="Q10113"/>
<dbReference type="OMA" id="WIKRFWD"/>
<dbReference type="PhylomeDB" id="Q10113"/>
<dbReference type="CD-CODE" id="9095A454">
    <property type="entry name" value="TIP body"/>
</dbReference>
<dbReference type="EvolutionaryTrace" id="Q10113"/>
<dbReference type="PRO" id="PR:Q10113"/>
<dbReference type="Proteomes" id="UP000002485">
    <property type="component" value="Chromosome I"/>
</dbReference>
<dbReference type="GO" id="GO:0000235">
    <property type="term" value="C:astral microtubule"/>
    <property type="evidence" value="ECO:0000314"/>
    <property type="project" value="PomBase"/>
</dbReference>
<dbReference type="GO" id="GO:0051285">
    <property type="term" value="C:cell cortex of cell tip"/>
    <property type="evidence" value="ECO:0000314"/>
    <property type="project" value="PomBase"/>
</dbReference>
<dbReference type="GO" id="GO:0055028">
    <property type="term" value="C:cortical microtubule"/>
    <property type="evidence" value="ECO:0000314"/>
    <property type="project" value="PomBase"/>
</dbReference>
<dbReference type="GO" id="GO:0005881">
    <property type="term" value="C:cytoplasmic microtubule"/>
    <property type="evidence" value="ECO:0000314"/>
    <property type="project" value="PomBase"/>
</dbReference>
<dbReference type="GO" id="GO:0015630">
    <property type="term" value="C:microtubule cytoskeleton"/>
    <property type="evidence" value="ECO:0000314"/>
    <property type="project" value="PomBase"/>
</dbReference>
<dbReference type="GO" id="GO:0005815">
    <property type="term" value="C:microtubule organizing center"/>
    <property type="evidence" value="ECO:0000318"/>
    <property type="project" value="GO_Central"/>
</dbReference>
<dbReference type="GO" id="GO:0035371">
    <property type="term" value="C:microtubule plus-end"/>
    <property type="evidence" value="ECO:0000314"/>
    <property type="project" value="PomBase"/>
</dbReference>
<dbReference type="GO" id="GO:0061673">
    <property type="term" value="C:mitotic spindle astral microtubule"/>
    <property type="evidence" value="ECO:0000314"/>
    <property type="project" value="PomBase"/>
</dbReference>
<dbReference type="GO" id="GO:1990023">
    <property type="term" value="C:mitotic spindle midzone"/>
    <property type="evidence" value="ECO:0000314"/>
    <property type="project" value="PomBase"/>
</dbReference>
<dbReference type="GO" id="GO:0044732">
    <property type="term" value="C:mitotic spindle pole body"/>
    <property type="evidence" value="ECO:0000314"/>
    <property type="project" value="PomBase"/>
</dbReference>
<dbReference type="GO" id="GO:0005880">
    <property type="term" value="C:nuclear microtubule"/>
    <property type="evidence" value="ECO:0000314"/>
    <property type="project" value="PomBase"/>
</dbReference>
<dbReference type="GO" id="GO:0005634">
    <property type="term" value="C:nucleus"/>
    <property type="evidence" value="ECO:0007005"/>
    <property type="project" value="PomBase"/>
</dbReference>
<dbReference type="GO" id="GO:1905760">
    <property type="term" value="C:post-anaphase array microtubule end"/>
    <property type="evidence" value="ECO:0000269"/>
    <property type="project" value="PomBase"/>
</dbReference>
<dbReference type="GO" id="GO:0051233">
    <property type="term" value="C:spindle midzone"/>
    <property type="evidence" value="ECO:0000318"/>
    <property type="project" value="GO_Central"/>
</dbReference>
<dbReference type="GO" id="GO:0001671">
    <property type="term" value="F:ATPase activator activity"/>
    <property type="evidence" value="ECO:0000314"/>
    <property type="project" value="UniProtKB"/>
</dbReference>
<dbReference type="GO" id="GO:0008093">
    <property type="term" value="F:cytoskeletal anchor activity"/>
    <property type="evidence" value="ECO:0000314"/>
    <property type="project" value="PomBase"/>
</dbReference>
<dbReference type="GO" id="GO:0008017">
    <property type="term" value="F:microtubule binding"/>
    <property type="evidence" value="ECO:0000314"/>
    <property type="project" value="UniProtKB"/>
</dbReference>
<dbReference type="GO" id="GO:0099609">
    <property type="term" value="F:microtubule lateral binding"/>
    <property type="evidence" value="ECO:0000314"/>
    <property type="project" value="PomBase"/>
</dbReference>
<dbReference type="GO" id="GO:0051010">
    <property type="term" value="F:microtubule plus-end binding"/>
    <property type="evidence" value="ECO:0000314"/>
    <property type="project" value="PomBase"/>
</dbReference>
<dbReference type="GO" id="GO:0140693">
    <property type="term" value="F:molecular condensate scaffold activity"/>
    <property type="evidence" value="ECO:0000269"/>
    <property type="project" value="PomBase"/>
</dbReference>
<dbReference type="GO" id="GO:0051315">
    <property type="term" value="P:attachment of mitotic spindle microtubules to kinetochore"/>
    <property type="evidence" value="ECO:0000315"/>
    <property type="project" value="PomBase"/>
</dbReference>
<dbReference type="GO" id="GO:0051301">
    <property type="term" value="P:cell division"/>
    <property type="evidence" value="ECO:0007669"/>
    <property type="project" value="UniProtKB-KW"/>
</dbReference>
<dbReference type="GO" id="GO:0030989">
    <property type="term" value="P:dynein-driven meiotic oscillatory nuclear movement"/>
    <property type="evidence" value="ECO:0000315"/>
    <property type="project" value="PomBase"/>
</dbReference>
<dbReference type="GO" id="GO:0000742">
    <property type="term" value="P:karyogamy involved in conjugation with cellular fusion"/>
    <property type="evidence" value="ECO:0000315"/>
    <property type="project" value="PomBase"/>
</dbReference>
<dbReference type="GO" id="GO:0000743">
    <property type="term" value="P:nuclear migration involved in conjugation with cellular fusion"/>
    <property type="evidence" value="ECO:0000315"/>
    <property type="project" value="PomBase"/>
</dbReference>
<dbReference type="GO" id="GO:0035372">
    <property type="term" value="P:protein localization to microtubule"/>
    <property type="evidence" value="ECO:0000314"/>
    <property type="project" value="PomBase"/>
</dbReference>
<dbReference type="GO" id="GO:0031110">
    <property type="term" value="P:regulation of microtubule polymerization or depolymerization"/>
    <property type="evidence" value="ECO:0000318"/>
    <property type="project" value="GO_Central"/>
</dbReference>
<dbReference type="GO" id="GO:0051225">
    <property type="term" value="P:spindle assembly"/>
    <property type="evidence" value="ECO:0000318"/>
    <property type="project" value="GO_Central"/>
</dbReference>
<dbReference type="FunFam" id="1.10.418.10:FF:000028">
    <property type="entry name" value="RP/EB family microtubule-associated protein"/>
    <property type="match status" value="1"/>
</dbReference>
<dbReference type="Gene3D" id="1.20.5.1430">
    <property type="match status" value="1"/>
</dbReference>
<dbReference type="Gene3D" id="1.10.418.10">
    <property type="entry name" value="Calponin-like domain"/>
    <property type="match status" value="1"/>
</dbReference>
<dbReference type="InterPro" id="IPR001715">
    <property type="entry name" value="CH_dom"/>
</dbReference>
<dbReference type="InterPro" id="IPR036872">
    <property type="entry name" value="CH_dom_sf"/>
</dbReference>
<dbReference type="InterPro" id="IPR004953">
    <property type="entry name" value="EB1_C"/>
</dbReference>
<dbReference type="InterPro" id="IPR036133">
    <property type="entry name" value="EB1_C_sf"/>
</dbReference>
<dbReference type="InterPro" id="IPR027328">
    <property type="entry name" value="MAPRE"/>
</dbReference>
<dbReference type="PANTHER" id="PTHR10623">
    <property type="entry name" value="MICROTUBULE-ASSOCIATED PROTEIN RP/EB FAMILY MEMBER"/>
    <property type="match status" value="1"/>
</dbReference>
<dbReference type="Pfam" id="PF03271">
    <property type="entry name" value="EB1"/>
    <property type="match status" value="1"/>
</dbReference>
<dbReference type="SUPFAM" id="SSF47576">
    <property type="entry name" value="Calponin-homology domain, CH-domain"/>
    <property type="match status" value="1"/>
</dbReference>
<dbReference type="SUPFAM" id="SSF140612">
    <property type="entry name" value="EB1 dimerisation domain-like"/>
    <property type="match status" value="1"/>
</dbReference>
<dbReference type="PROSITE" id="PS50021">
    <property type="entry name" value="CH"/>
    <property type="match status" value="1"/>
</dbReference>
<dbReference type="PROSITE" id="PS51230">
    <property type="entry name" value="EB1_C"/>
    <property type="match status" value="1"/>
</dbReference>
<name>MAL3_SCHPO</name>
<evidence type="ECO:0000255" key="1">
    <source>
        <dbReference type="PROSITE-ProRule" id="PRU00044"/>
    </source>
</evidence>
<evidence type="ECO:0000255" key="2">
    <source>
        <dbReference type="PROSITE-ProRule" id="PRU00576"/>
    </source>
</evidence>
<evidence type="ECO:0000256" key="3">
    <source>
        <dbReference type="SAM" id="MobiDB-lite"/>
    </source>
</evidence>
<evidence type="ECO:0000269" key="4">
    <source>
    </source>
</evidence>
<evidence type="ECO:0000269" key="5">
    <source>
    </source>
</evidence>
<evidence type="ECO:0000269" key="6">
    <source>
    </source>
</evidence>
<evidence type="ECO:0000269" key="7">
    <source>
    </source>
</evidence>
<evidence type="ECO:0000305" key="8"/>
<evidence type="ECO:0007829" key="9">
    <source>
        <dbReference type="PDB" id="5M97"/>
    </source>
</evidence>
<comment type="function">
    <text evidence="4 5">May play a role in regulating the integrity of microtubules possibly by influencing their stability. Involved in an anchoring mechanism to maintain tea2 and tip1 at growing microtubule ends. Strongly stimulates the ATPase activity of tea2.</text>
</comment>
<comment type="subunit">
    <text evidence="4 5">Interacts with tea2.</text>
</comment>
<comment type="interaction">
    <interactant intactId="EBI-1002268">
        <id>Q10113</id>
    </interactant>
    <interactant intactId="EBI-1112382">
        <id>O42874</id>
        <label>peg1</label>
    </interactant>
    <organismsDiffer>false</organismsDiffer>
    <experiments>4</experiments>
</comment>
<comment type="interaction">
    <interactant intactId="EBI-1002268">
        <id>Q10113</id>
    </interactant>
    <interactant intactId="EBI-1002205">
        <id>O59757</id>
        <label>spc7</label>
    </interactant>
    <organismsDiffer>false</organismsDiffer>
    <experiments>2</experiments>
</comment>
<comment type="interaction">
    <interactant intactId="EBI-1002268">
        <id>Q10113</id>
    </interactant>
    <interactant intactId="EBI-1107767">
        <id>Q1MTQ1</id>
        <label>tea2</label>
    </interactant>
    <organismsDiffer>false</organismsDiffer>
    <experiments>3</experiments>
</comment>
<comment type="interaction">
    <interactant intactId="EBI-1002268">
        <id>Q10113</id>
    </interactant>
    <interactant intactId="EBI-1102463">
        <id>P79065</id>
        <label>tip1</label>
    </interactant>
    <organismsDiffer>false</organismsDiffer>
    <experiments>3</experiments>
</comment>
<comment type="subcellular location">
    <subcellularLocation>
        <location evidence="4 6">Cytoplasm</location>
        <location evidence="4 6">Cytoskeleton</location>
    </subcellularLocation>
    <text evidence="4 6">Associated with microtubules (PubMed:15177031, PubMed:18256284). During metaphase, localizes to astral microtubules, spindle microtubules, and intranuclear microtubules (INMs) (PubMed:18256284).</text>
</comment>
<comment type="disruption phenotype">
    <text evidence="7">Double knockout of mal3 and ask1 leads to cell shape defects, including 6% T-shaped cells.</text>
</comment>
<comment type="similarity">
    <text evidence="8">Belongs to the MAPRE family.</text>
</comment>
<organism>
    <name type="scientific">Schizosaccharomyces pombe (strain 972 / ATCC 24843)</name>
    <name type="common">Fission yeast</name>
    <dbReference type="NCBI Taxonomy" id="284812"/>
    <lineage>
        <taxon>Eukaryota</taxon>
        <taxon>Fungi</taxon>
        <taxon>Dikarya</taxon>
        <taxon>Ascomycota</taxon>
        <taxon>Taphrinomycotina</taxon>
        <taxon>Schizosaccharomycetes</taxon>
        <taxon>Schizosaccharomycetales</taxon>
        <taxon>Schizosaccharomycetaceae</taxon>
        <taxon>Schizosaccharomyces</taxon>
    </lineage>
</organism>
<sequence length="308" mass="35094">MSESRQELLAWINQVTSLGLTRIEDCGKGYAMIQIFDSIYQDIPLKKVNFECNNEYQYINNWKVLQQVFLKKGIDKVVDPERLSRCKMQDNLEFVQWAKRFWDQYYPGGDYDALARRGNRGPANTRVMNSSAGATGPSRRRQVSSGSSTPSMTKSSANNNNVSSTANTAAVLRAKQAQQQITSLETQLYEVNETMFGLERERDFYFNKLREIEILVQTHLTTSPMSMENMLERIQAILYSTEDGFELPPDQPADLTTALTDHDTNNVAEEAQMTDLKDSETQRVPSAPDFVHARLQSLEVDDDENITF</sequence>
<gene>
    <name type="primary">mal3</name>
    <name type="ORF">SPAC18G6.15</name>
</gene>
<protein>
    <recommendedName>
        <fullName>Microtubule integrity protein mal3</fullName>
    </recommendedName>
</protein>
<reference key="1">
    <citation type="journal article" date="1997" name="J. Cell Biol.">
        <title>Mal3, the fission yeast homologue of the human APC-interacting protein EB-1 is required for microtubule integrity and the maintenance of cell form.</title>
        <authorList>
            <person name="Beinhauer J.D."/>
            <person name="Hagan I.M."/>
            <person name="Hegemann J.H."/>
            <person name="Fleig U."/>
        </authorList>
    </citation>
    <scope>NUCLEOTIDE SEQUENCE [GENOMIC DNA]</scope>
</reference>
<reference key="2">
    <citation type="journal article" date="2002" name="Nature">
        <title>The genome sequence of Schizosaccharomyces pombe.</title>
        <authorList>
            <person name="Wood V."/>
            <person name="Gwilliam R."/>
            <person name="Rajandream M.A."/>
            <person name="Lyne M.H."/>
            <person name="Lyne R."/>
            <person name="Stewart A."/>
            <person name="Sgouros J.G."/>
            <person name="Peat N."/>
            <person name="Hayles J."/>
            <person name="Baker S.G."/>
            <person name="Basham D."/>
            <person name="Bowman S."/>
            <person name="Brooks K."/>
            <person name="Brown D."/>
            <person name="Brown S."/>
            <person name="Chillingworth T."/>
            <person name="Churcher C.M."/>
            <person name="Collins M."/>
            <person name="Connor R."/>
            <person name="Cronin A."/>
            <person name="Davis P."/>
            <person name="Feltwell T."/>
            <person name="Fraser A."/>
            <person name="Gentles S."/>
            <person name="Goble A."/>
            <person name="Hamlin N."/>
            <person name="Harris D.E."/>
            <person name="Hidalgo J."/>
            <person name="Hodgson G."/>
            <person name="Holroyd S."/>
            <person name="Hornsby T."/>
            <person name="Howarth S."/>
            <person name="Huckle E.J."/>
            <person name="Hunt S."/>
            <person name="Jagels K."/>
            <person name="James K.D."/>
            <person name="Jones L."/>
            <person name="Jones M."/>
            <person name="Leather S."/>
            <person name="McDonald S."/>
            <person name="McLean J."/>
            <person name="Mooney P."/>
            <person name="Moule S."/>
            <person name="Mungall K.L."/>
            <person name="Murphy L.D."/>
            <person name="Niblett D."/>
            <person name="Odell C."/>
            <person name="Oliver K."/>
            <person name="O'Neil S."/>
            <person name="Pearson D."/>
            <person name="Quail M.A."/>
            <person name="Rabbinowitsch E."/>
            <person name="Rutherford K.M."/>
            <person name="Rutter S."/>
            <person name="Saunders D."/>
            <person name="Seeger K."/>
            <person name="Sharp S."/>
            <person name="Skelton J."/>
            <person name="Simmonds M.N."/>
            <person name="Squares R."/>
            <person name="Squares S."/>
            <person name="Stevens K."/>
            <person name="Taylor K."/>
            <person name="Taylor R.G."/>
            <person name="Tivey A."/>
            <person name="Walsh S.V."/>
            <person name="Warren T."/>
            <person name="Whitehead S."/>
            <person name="Woodward J.R."/>
            <person name="Volckaert G."/>
            <person name="Aert R."/>
            <person name="Robben J."/>
            <person name="Grymonprez B."/>
            <person name="Weltjens I."/>
            <person name="Vanstreels E."/>
            <person name="Rieger M."/>
            <person name="Schaefer M."/>
            <person name="Mueller-Auer S."/>
            <person name="Gabel C."/>
            <person name="Fuchs M."/>
            <person name="Duesterhoeft A."/>
            <person name="Fritzc C."/>
            <person name="Holzer E."/>
            <person name="Moestl D."/>
            <person name="Hilbert H."/>
            <person name="Borzym K."/>
            <person name="Langer I."/>
            <person name="Beck A."/>
            <person name="Lehrach H."/>
            <person name="Reinhardt R."/>
            <person name="Pohl T.M."/>
            <person name="Eger P."/>
            <person name="Zimmermann W."/>
            <person name="Wedler H."/>
            <person name="Wambutt R."/>
            <person name="Purnelle B."/>
            <person name="Goffeau A."/>
            <person name="Cadieu E."/>
            <person name="Dreano S."/>
            <person name="Gloux S."/>
            <person name="Lelaure V."/>
            <person name="Mottier S."/>
            <person name="Galibert F."/>
            <person name="Aves S.J."/>
            <person name="Xiang Z."/>
            <person name="Hunt C."/>
            <person name="Moore K."/>
            <person name="Hurst S.M."/>
            <person name="Lucas M."/>
            <person name="Rochet M."/>
            <person name="Gaillardin C."/>
            <person name="Tallada V.A."/>
            <person name="Garzon A."/>
            <person name="Thode G."/>
            <person name="Daga R.R."/>
            <person name="Cruzado L."/>
            <person name="Jimenez J."/>
            <person name="Sanchez M."/>
            <person name="del Rey F."/>
            <person name="Benito J."/>
            <person name="Dominguez A."/>
            <person name="Revuelta J.L."/>
            <person name="Moreno S."/>
            <person name="Armstrong J."/>
            <person name="Forsburg S.L."/>
            <person name="Cerutti L."/>
            <person name="Lowe T."/>
            <person name="McCombie W.R."/>
            <person name="Paulsen I."/>
            <person name="Potashkin J."/>
            <person name="Shpakovski G.V."/>
            <person name="Ussery D."/>
            <person name="Barrell B.G."/>
            <person name="Nurse P."/>
        </authorList>
    </citation>
    <scope>NUCLEOTIDE SEQUENCE [LARGE SCALE GENOMIC DNA]</scope>
    <source>
        <strain>972 / ATCC 24843</strain>
    </source>
</reference>
<reference key="3">
    <citation type="journal article" date="2004" name="Dev. Cell">
        <title>Tea2p kinesin is involved in spatial microtubule organization by transporting tip1p on microtubules.</title>
        <authorList>
            <person name="Busch K.E."/>
            <person name="Hayles J."/>
            <person name="Nurse P."/>
            <person name="Brunner D."/>
        </authorList>
    </citation>
    <scope>FUNCTION</scope>
    <scope>INTERACTION WITH TEA2</scope>
    <scope>SUBCELLULAR LOCATION</scope>
</reference>
<reference key="4">
    <citation type="journal article" date="2005" name="J. Biol. Chem.">
        <title>The EB1 homolog Mal3 stimulates the ATPase of the kinesin Tea2 by recruiting it to the microtubule.</title>
        <authorList>
            <person name="Browning H."/>
            <person name="Hackney D.D."/>
        </authorList>
    </citation>
    <scope>FUNCTION</scope>
    <scope>INTERACTION WITH TEA2</scope>
</reference>
<reference key="5">
    <citation type="journal article" date="2008" name="Mol. Biol. Cell">
        <title>Sister kinetochore recapture in fission yeast occurs by two distinct mechanisms, both requiring Dam1 and Klp2.</title>
        <authorList>
            <person name="Gachet Y."/>
            <person name="Reyes C."/>
            <person name="Courtheoux T."/>
            <person name="Goldstone S."/>
            <person name="Gay G."/>
            <person name="Serrurier C."/>
            <person name="Tournier S."/>
        </authorList>
    </citation>
    <scope>SUBCELLULAR LOCATION</scope>
</reference>
<reference key="6">
    <citation type="journal article" date="2010" name="Proc. Natl. Acad. Sci. U.S.A.">
        <title>A non-ring-like form of the Dam1 complex modulates microtubule dynamics in fission yeast.</title>
        <authorList>
            <person name="Gao Q."/>
            <person name="Courtheoux T."/>
            <person name="Gachet Y."/>
            <person name="Tournier S."/>
            <person name="He X."/>
        </authorList>
    </citation>
    <scope>DISRUPTION PHENOTYPE</scope>
</reference>